<protein>
    <recommendedName>
        <fullName evidence="1">S-adenosylmethionine:tRNA ribosyltransferase-isomerase</fullName>
        <ecNumber evidence="1">2.4.99.17</ecNumber>
    </recommendedName>
    <alternativeName>
        <fullName evidence="1">Queuosine biosynthesis protein QueA</fullName>
    </alternativeName>
</protein>
<name>QUEA_CHLPD</name>
<accession>A1BEM6</accession>
<evidence type="ECO:0000255" key="1">
    <source>
        <dbReference type="HAMAP-Rule" id="MF_00113"/>
    </source>
</evidence>
<dbReference type="EC" id="2.4.99.17" evidence="1"/>
<dbReference type="EMBL" id="CP000492">
    <property type="protein sequence ID" value="ABL64853.1"/>
    <property type="molecule type" value="Genomic_DNA"/>
</dbReference>
<dbReference type="RefSeq" id="WP_011744681.1">
    <property type="nucleotide sequence ID" value="NC_008639.1"/>
</dbReference>
<dbReference type="SMR" id="A1BEM6"/>
<dbReference type="STRING" id="290317.Cpha266_0802"/>
<dbReference type="KEGG" id="cph:Cpha266_0802"/>
<dbReference type="eggNOG" id="COG0809">
    <property type="taxonomic scope" value="Bacteria"/>
</dbReference>
<dbReference type="HOGENOM" id="CLU_039110_1_0_10"/>
<dbReference type="OrthoDB" id="9805933at2"/>
<dbReference type="UniPathway" id="UPA00392"/>
<dbReference type="Proteomes" id="UP000008701">
    <property type="component" value="Chromosome"/>
</dbReference>
<dbReference type="GO" id="GO:0005737">
    <property type="term" value="C:cytoplasm"/>
    <property type="evidence" value="ECO:0007669"/>
    <property type="project" value="UniProtKB-SubCell"/>
</dbReference>
<dbReference type="GO" id="GO:0051075">
    <property type="term" value="F:S-adenosylmethionine:tRNA ribosyltransferase-isomerase activity"/>
    <property type="evidence" value="ECO:0007669"/>
    <property type="project" value="UniProtKB-EC"/>
</dbReference>
<dbReference type="GO" id="GO:0008616">
    <property type="term" value="P:queuosine biosynthetic process"/>
    <property type="evidence" value="ECO:0007669"/>
    <property type="project" value="UniProtKB-UniRule"/>
</dbReference>
<dbReference type="GO" id="GO:0002099">
    <property type="term" value="P:tRNA wobble guanine modification"/>
    <property type="evidence" value="ECO:0007669"/>
    <property type="project" value="TreeGrafter"/>
</dbReference>
<dbReference type="Gene3D" id="2.40.10.240">
    <property type="entry name" value="QueA-like"/>
    <property type="match status" value="1"/>
</dbReference>
<dbReference type="Gene3D" id="3.40.1780.10">
    <property type="entry name" value="QueA-like"/>
    <property type="match status" value="1"/>
</dbReference>
<dbReference type="HAMAP" id="MF_00113">
    <property type="entry name" value="QueA"/>
    <property type="match status" value="1"/>
</dbReference>
<dbReference type="InterPro" id="IPR003699">
    <property type="entry name" value="QueA"/>
</dbReference>
<dbReference type="InterPro" id="IPR042118">
    <property type="entry name" value="QueA_dom1"/>
</dbReference>
<dbReference type="InterPro" id="IPR042119">
    <property type="entry name" value="QueA_dom2"/>
</dbReference>
<dbReference type="InterPro" id="IPR036100">
    <property type="entry name" value="QueA_sf"/>
</dbReference>
<dbReference type="NCBIfam" id="NF001140">
    <property type="entry name" value="PRK00147.1"/>
    <property type="match status" value="1"/>
</dbReference>
<dbReference type="NCBIfam" id="TIGR00113">
    <property type="entry name" value="queA"/>
    <property type="match status" value="1"/>
</dbReference>
<dbReference type="PANTHER" id="PTHR30307">
    <property type="entry name" value="S-ADENOSYLMETHIONINE:TRNA RIBOSYLTRANSFERASE-ISOMERASE"/>
    <property type="match status" value="1"/>
</dbReference>
<dbReference type="PANTHER" id="PTHR30307:SF0">
    <property type="entry name" value="S-ADENOSYLMETHIONINE:TRNA RIBOSYLTRANSFERASE-ISOMERASE"/>
    <property type="match status" value="1"/>
</dbReference>
<dbReference type="Pfam" id="PF02547">
    <property type="entry name" value="Queuosine_synth"/>
    <property type="match status" value="1"/>
</dbReference>
<dbReference type="SUPFAM" id="SSF111337">
    <property type="entry name" value="QueA-like"/>
    <property type="match status" value="1"/>
</dbReference>
<sequence length="341" mass="37880">MKVSDFDYELPESHIARYPPDERGSTRLLVLQRSTGEIMHSRYAGLHGFLRKGDLLVLNNSRVVKARMFAFKPTGGKIELVLLEKHGDEQNLVLYRGSLKKGDALLAYGCEFGVEELVGQGVAVLSVKGEGTVQDVFERYAAMPIPPYLKREAEEIDRERYQTVFAEQPGSVAAPTASLNMTGELFDSLRQKGVSIASMTLHVGLGTFLPIRVDHFDEHVMHREFYVIPDETIALIRTTKNNGGRVIAVGTTVTRALEHAADVVFNSNGNGSVSGEADIFIYPGYRFRVIDALLTNFHAPRSTVLMLTAAFAGAEKLFHAYAEALRWEYDFLSYGDSMLIL</sequence>
<comment type="function">
    <text evidence="1">Transfers and isomerizes the ribose moiety from AdoMet to the 7-aminomethyl group of 7-deazaguanine (preQ1-tRNA) to give epoxyqueuosine (oQ-tRNA).</text>
</comment>
<comment type="catalytic activity">
    <reaction evidence="1">
        <text>7-aminomethyl-7-carbaguanosine(34) in tRNA + S-adenosyl-L-methionine = epoxyqueuosine(34) in tRNA + adenine + L-methionine + 2 H(+)</text>
        <dbReference type="Rhea" id="RHEA:32155"/>
        <dbReference type="Rhea" id="RHEA-COMP:10342"/>
        <dbReference type="Rhea" id="RHEA-COMP:18582"/>
        <dbReference type="ChEBI" id="CHEBI:15378"/>
        <dbReference type="ChEBI" id="CHEBI:16708"/>
        <dbReference type="ChEBI" id="CHEBI:57844"/>
        <dbReference type="ChEBI" id="CHEBI:59789"/>
        <dbReference type="ChEBI" id="CHEBI:82833"/>
        <dbReference type="ChEBI" id="CHEBI:194443"/>
        <dbReference type="EC" id="2.4.99.17"/>
    </reaction>
</comment>
<comment type="pathway">
    <text evidence="1">tRNA modification; tRNA-queuosine biosynthesis.</text>
</comment>
<comment type="subunit">
    <text evidence="1">Monomer.</text>
</comment>
<comment type="subcellular location">
    <subcellularLocation>
        <location evidence="1">Cytoplasm</location>
    </subcellularLocation>
</comment>
<comment type="similarity">
    <text evidence="1">Belongs to the QueA family.</text>
</comment>
<reference key="1">
    <citation type="submission" date="2006-12" db="EMBL/GenBank/DDBJ databases">
        <title>Complete sequence of Chlorobium phaeobacteroides DSM 266.</title>
        <authorList>
            <consortium name="US DOE Joint Genome Institute"/>
            <person name="Copeland A."/>
            <person name="Lucas S."/>
            <person name="Lapidus A."/>
            <person name="Barry K."/>
            <person name="Detter J.C."/>
            <person name="Glavina del Rio T."/>
            <person name="Hammon N."/>
            <person name="Israni S."/>
            <person name="Pitluck S."/>
            <person name="Goltsman E."/>
            <person name="Schmutz J."/>
            <person name="Larimer F."/>
            <person name="Land M."/>
            <person name="Hauser L."/>
            <person name="Mikhailova N."/>
            <person name="Li T."/>
            <person name="Overmann J."/>
            <person name="Bryant D.A."/>
            <person name="Richardson P."/>
        </authorList>
    </citation>
    <scope>NUCLEOTIDE SEQUENCE [LARGE SCALE GENOMIC DNA]</scope>
    <source>
        <strain>DSM 266 / SMG 266 / 2430</strain>
    </source>
</reference>
<organism>
    <name type="scientific">Chlorobium phaeobacteroides (strain DSM 266 / SMG 266 / 2430)</name>
    <dbReference type="NCBI Taxonomy" id="290317"/>
    <lineage>
        <taxon>Bacteria</taxon>
        <taxon>Pseudomonadati</taxon>
        <taxon>Chlorobiota</taxon>
        <taxon>Chlorobiia</taxon>
        <taxon>Chlorobiales</taxon>
        <taxon>Chlorobiaceae</taxon>
        <taxon>Chlorobium/Pelodictyon group</taxon>
        <taxon>Chlorobium</taxon>
    </lineage>
</organism>
<gene>
    <name evidence="1" type="primary">queA</name>
    <name type="ordered locus">Cpha266_0802</name>
</gene>
<keyword id="KW-0963">Cytoplasm</keyword>
<keyword id="KW-0671">Queuosine biosynthesis</keyword>
<keyword id="KW-1185">Reference proteome</keyword>
<keyword id="KW-0949">S-adenosyl-L-methionine</keyword>
<keyword id="KW-0808">Transferase</keyword>
<feature type="chain" id="PRO_1000015195" description="S-adenosylmethionine:tRNA ribosyltransferase-isomerase">
    <location>
        <begin position="1"/>
        <end position="341"/>
    </location>
</feature>
<proteinExistence type="inferred from homology"/>